<protein>
    <recommendedName>
        <fullName evidence="1">Hydroxyacylglutathione hydrolase</fullName>
        <ecNumber evidence="1">3.1.2.6</ecNumber>
    </recommendedName>
    <alternativeName>
        <fullName evidence="1">Glyoxalase II</fullName>
        <shortName evidence="1">Glx II</shortName>
    </alternativeName>
</protein>
<dbReference type="EC" id="3.1.2.6" evidence="1"/>
<dbReference type="EMBL" id="CP000891">
    <property type="protein sequence ID" value="ABX49229.1"/>
    <property type="molecule type" value="Genomic_DNA"/>
</dbReference>
<dbReference type="RefSeq" id="WP_006087265.1">
    <property type="nucleotide sequence ID" value="NC_009997.1"/>
</dbReference>
<dbReference type="SMR" id="A9L0E9"/>
<dbReference type="GeneID" id="11772212"/>
<dbReference type="KEGG" id="sbn:Sbal195_2059"/>
<dbReference type="HOGENOM" id="CLU_030571_4_1_6"/>
<dbReference type="UniPathway" id="UPA00619">
    <property type="reaction ID" value="UER00676"/>
</dbReference>
<dbReference type="Proteomes" id="UP000000770">
    <property type="component" value="Chromosome"/>
</dbReference>
<dbReference type="GO" id="GO:0004416">
    <property type="term" value="F:hydroxyacylglutathione hydrolase activity"/>
    <property type="evidence" value="ECO:0007669"/>
    <property type="project" value="UniProtKB-UniRule"/>
</dbReference>
<dbReference type="GO" id="GO:0046872">
    <property type="term" value="F:metal ion binding"/>
    <property type="evidence" value="ECO:0007669"/>
    <property type="project" value="UniProtKB-KW"/>
</dbReference>
<dbReference type="GO" id="GO:0019243">
    <property type="term" value="P:methylglyoxal catabolic process to D-lactate via S-lactoyl-glutathione"/>
    <property type="evidence" value="ECO:0007669"/>
    <property type="project" value="InterPro"/>
</dbReference>
<dbReference type="CDD" id="cd07723">
    <property type="entry name" value="hydroxyacylglutathione_hydrolase_MBL-fold"/>
    <property type="match status" value="1"/>
</dbReference>
<dbReference type="Gene3D" id="3.60.15.10">
    <property type="entry name" value="Ribonuclease Z/Hydroxyacylglutathione hydrolase-like"/>
    <property type="match status" value="1"/>
</dbReference>
<dbReference type="HAMAP" id="MF_01374">
    <property type="entry name" value="Glyoxalase_2"/>
    <property type="match status" value="1"/>
</dbReference>
<dbReference type="InterPro" id="IPR035680">
    <property type="entry name" value="Clx_II_MBL"/>
</dbReference>
<dbReference type="InterPro" id="IPR050110">
    <property type="entry name" value="Glyoxalase_II_hydrolase"/>
</dbReference>
<dbReference type="InterPro" id="IPR032282">
    <property type="entry name" value="HAGH_C"/>
</dbReference>
<dbReference type="InterPro" id="IPR017782">
    <property type="entry name" value="Hydroxyacylglutathione_Hdrlase"/>
</dbReference>
<dbReference type="InterPro" id="IPR001279">
    <property type="entry name" value="Metallo-B-lactamas"/>
</dbReference>
<dbReference type="InterPro" id="IPR036866">
    <property type="entry name" value="RibonucZ/Hydroxyglut_hydro"/>
</dbReference>
<dbReference type="NCBIfam" id="TIGR03413">
    <property type="entry name" value="GSH_gloB"/>
    <property type="match status" value="1"/>
</dbReference>
<dbReference type="PANTHER" id="PTHR43705">
    <property type="entry name" value="HYDROXYACYLGLUTATHIONE HYDROLASE"/>
    <property type="match status" value="1"/>
</dbReference>
<dbReference type="PANTHER" id="PTHR43705:SF1">
    <property type="entry name" value="HYDROXYACYLGLUTATHIONE HYDROLASE GLOB"/>
    <property type="match status" value="1"/>
</dbReference>
<dbReference type="Pfam" id="PF16123">
    <property type="entry name" value="HAGH_C"/>
    <property type="match status" value="1"/>
</dbReference>
<dbReference type="Pfam" id="PF00753">
    <property type="entry name" value="Lactamase_B"/>
    <property type="match status" value="2"/>
</dbReference>
<dbReference type="PIRSF" id="PIRSF005457">
    <property type="entry name" value="Glx"/>
    <property type="match status" value="1"/>
</dbReference>
<dbReference type="SMART" id="SM00849">
    <property type="entry name" value="Lactamase_B"/>
    <property type="match status" value="1"/>
</dbReference>
<dbReference type="SUPFAM" id="SSF56281">
    <property type="entry name" value="Metallo-hydrolase/oxidoreductase"/>
    <property type="match status" value="1"/>
</dbReference>
<gene>
    <name evidence="1" type="primary">gloB</name>
    <name type="ordered locus">Sbal195_2059</name>
</gene>
<organism>
    <name type="scientific">Shewanella baltica (strain OS195)</name>
    <dbReference type="NCBI Taxonomy" id="399599"/>
    <lineage>
        <taxon>Bacteria</taxon>
        <taxon>Pseudomonadati</taxon>
        <taxon>Pseudomonadota</taxon>
        <taxon>Gammaproteobacteria</taxon>
        <taxon>Alteromonadales</taxon>
        <taxon>Shewanellaceae</taxon>
        <taxon>Shewanella</taxon>
    </lineage>
</organism>
<feature type="chain" id="PRO_1000144805" description="Hydroxyacylglutathione hydrolase">
    <location>
        <begin position="1"/>
        <end position="263"/>
    </location>
</feature>
<feature type="binding site" evidence="1">
    <location>
        <position position="55"/>
    </location>
    <ligand>
        <name>Zn(2+)</name>
        <dbReference type="ChEBI" id="CHEBI:29105"/>
        <label>1</label>
    </ligand>
</feature>
<feature type="binding site" evidence="1">
    <location>
        <position position="57"/>
    </location>
    <ligand>
        <name>Zn(2+)</name>
        <dbReference type="ChEBI" id="CHEBI:29105"/>
        <label>1</label>
    </ligand>
</feature>
<feature type="binding site" evidence="1">
    <location>
        <position position="59"/>
    </location>
    <ligand>
        <name>Zn(2+)</name>
        <dbReference type="ChEBI" id="CHEBI:29105"/>
        <label>2</label>
    </ligand>
</feature>
<feature type="binding site" evidence="1">
    <location>
        <position position="60"/>
    </location>
    <ligand>
        <name>Zn(2+)</name>
        <dbReference type="ChEBI" id="CHEBI:29105"/>
        <label>2</label>
    </ligand>
</feature>
<feature type="binding site" evidence="1">
    <location>
        <position position="117"/>
    </location>
    <ligand>
        <name>Zn(2+)</name>
        <dbReference type="ChEBI" id="CHEBI:29105"/>
        <label>1</label>
    </ligand>
</feature>
<feature type="binding site" evidence="1">
    <location>
        <position position="134"/>
    </location>
    <ligand>
        <name>Zn(2+)</name>
        <dbReference type="ChEBI" id="CHEBI:29105"/>
        <label>1</label>
    </ligand>
</feature>
<feature type="binding site" evidence="1">
    <location>
        <position position="134"/>
    </location>
    <ligand>
        <name>Zn(2+)</name>
        <dbReference type="ChEBI" id="CHEBI:29105"/>
        <label>2</label>
    </ligand>
</feature>
<feature type="binding site" evidence="1">
    <location>
        <position position="172"/>
    </location>
    <ligand>
        <name>Zn(2+)</name>
        <dbReference type="ChEBI" id="CHEBI:29105"/>
        <label>2</label>
    </ligand>
</feature>
<evidence type="ECO:0000255" key="1">
    <source>
        <dbReference type="HAMAP-Rule" id="MF_01374"/>
    </source>
</evidence>
<keyword id="KW-0378">Hydrolase</keyword>
<keyword id="KW-0479">Metal-binding</keyword>
<keyword id="KW-0862">Zinc</keyword>
<proteinExistence type="inferred from homology"/>
<comment type="function">
    <text evidence="1">Thiolesterase that catalyzes the hydrolysis of S-D-lactoyl-glutathione to form glutathione and D-lactic acid.</text>
</comment>
<comment type="catalytic activity">
    <reaction evidence="1">
        <text>an S-(2-hydroxyacyl)glutathione + H2O = a 2-hydroxy carboxylate + glutathione + H(+)</text>
        <dbReference type="Rhea" id="RHEA:21864"/>
        <dbReference type="ChEBI" id="CHEBI:15377"/>
        <dbReference type="ChEBI" id="CHEBI:15378"/>
        <dbReference type="ChEBI" id="CHEBI:57925"/>
        <dbReference type="ChEBI" id="CHEBI:58896"/>
        <dbReference type="ChEBI" id="CHEBI:71261"/>
        <dbReference type="EC" id="3.1.2.6"/>
    </reaction>
</comment>
<comment type="cofactor">
    <cofactor evidence="1">
        <name>Zn(2+)</name>
        <dbReference type="ChEBI" id="CHEBI:29105"/>
    </cofactor>
    <text evidence="1">Binds 2 Zn(2+) ions per subunit.</text>
</comment>
<comment type="pathway">
    <text evidence="1">Secondary metabolite metabolism; methylglyoxal degradation; (R)-lactate from methylglyoxal: step 2/2.</text>
</comment>
<comment type="subunit">
    <text evidence="1">Monomer.</text>
</comment>
<comment type="similarity">
    <text evidence="1">Belongs to the metallo-beta-lactamase superfamily. Glyoxalase II family.</text>
</comment>
<name>GLO2_SHEB9</name>
<reference key="1">
    <citation type="submission" date="2007-11" db="EMBL/GenBank/DDBJ databases">
        <title>Complete sequence of chromosome of Shewanella baltica OS195.</title>
        <authorList>
            <consortium name="US DOE Joint Genome Institute"/>
            <person name="Copeland A."/>
            <person name="Lucas S."/>
            <person name="Lapidus A."/>
            <person name="Barry K."/>
            <person name="Glavina del Rio T."/>
            <person name="Dalin E."/>
            <person name="Tice H."/>
            <person name="Pitluck S."/>
            <person name="Chain P."/>
            <person name="Malfatti S."/>
            <person name="Shin M."/>
            <person name="Vergez L."/>
            <person name="Schmutz J."/>
            <person name="Larimer F."/>
            <person name="Land M."/>
            <person name="Hauser L."/>
            <person name="Kyrpides N."/>
            <person name="Kim E."/>
            <person name="Brettar I."/>
            <person name="Rodrigues J."/>
            <person name="Konstantinidis K."/>
            <person name="Klappenbach J."/>
            <person name="Hofle M."/>
            <person name="Tiedje J."/>
            <person name="Richardson P."/>
        </authorList>
    </citation>
    <scope>NUCLEOTIDE SEQUENCE [LARGE SCALE GENOMIC DNA]</scope>
    <source>
        <strain>OS195</strain>
    </source>
</reference>
<accession>A9L0E9</accession>
<sequence length="263" mass="29145">MLTITAIKAFNDNYIWVLQQQPHTQVYVVDPGDASVVIDYLEANQLTLVGILLTHHHNDHTGGVAELQAYSQDRLTVYGPDNEKIEGITHPLHATAQPRFTLDYISGELQVLDVPGHTAGHIAYVIADALFCGDTLFSGGCGRLFEGTPAQMLNSLQQLAQLPAYTRVYCAHEYTLSNLKFALAVNPNNCALQDYNERAIALRRQDKATIPSTIALERAINPFLRASDTEIVGSIKQHFSDLSHANLDELGGFTLLRQWKDNF</sequence>